<evidence type="ECO:0000255" key="1">
    <source>
        <dbReference type="HAMAP-Rule" id="MF_00335"/>
    </source>
</evidence>
<evidence type="ECO:0000255" key="2">
    <source>
        <dbReference type="PROSITE-ProRule" id="PRU01175"/>
    </source>
</evidence>
<reference key="1">
    <citation type="journal article" date="2007" name="BMC Microbiol.">
        <title>Subtle genetic changes enhance virulence of methicillin resistant and sensitive Staphylococcus aureus.</title>
        <authorList>
            <person name="Highlander S.K."/>
            <person name="Hulten K.G."/>
            <person name="Qin X."/>
            <person name="Jiang H."/>
            <person name="Yerrapragada S."/>
            <person name="Mason E.O. Jr."/>
            <person name="Shang Y."/>
            <person name="Williams T.M."/>
            <person name="Fortunov R.M."/>
            <person name="Liu Y."/>
            <person name="Igboeli O."/>
            <person name="Petrosino J."/>
            <person name="Tirumalai M."/>
            <person name="Uzman A."/>
            <person name="Fox G.E."/>
            <person name="Cardenas A.M."/>
            <person name="Muzny D.M."/>
            <person name="Hemphill L."/>
            <person name="Ding Y."/>
            <person name="Dugan S."/>
            <person name="Blyth P.R."/>
            <person name="Buhay C.J."/>
            <person name="Dinh H.H."/>
            <person name="Hawes A.C."/>
            <person name="Holder M."/>
            <person name="Kovar C.L."/>
            <person name="Lee S.L."/>
            <person name="Liu W."/>
            <person name="Nazareth L.V."/>
            <person name="Wang Q."/>
            <person name="Zhou J."/>
            <person name="Kaplan S.L."/>
            <person name="Weinstock G.M."/>
        </authorList>
    </citation>
    <scope>NUCLEOTIDE SEQUENCE [LARGE SCALE GENOMIC DNA]</scope>
    <source>
        <strain>USA300 / TCH1516</strain>
    </source>
</reference>
<comment type="function">
    <text evidence="1">Endoribonuclease that initiates mRNA decay.</text>
</comment>
<comment type="subcellular location">
    <subcellularLocation>
        <location evidence="1">Cell membrane</location>
        <topology evidence="1">Single-pass membrane protein</topology>
    </subcellularLocation>
</comment>
<comment type="similarity">
    <text evidence="1">Belongs to the RNase Y family.</text>
</comment>
<keyword id="KW-1003">Cell membrane</keyword>
<keyword id="KW-0255">Endonuclease</keyword>
<keyword id="KW-0378">Hydrolase</keyword>
<keyword id="KW-0472">Membrane</keyword>
<keyword id="KW-0540">Nuclease</keyword>
<keyword id="KW-0694">RNA-binding</keyword>
<keyword id="KW-0812">Transmembrane</keyword>
<keyword id="KW-1133">Transmembrane helix</keyword>
<keyword id="KW-0843">Virulence</keyword>
<dbReference type="EC" id="3.1.-.-" evidence="1"/>
<dbReference type="EMBL" id="CP000730">
    <property type="protein sequence ID" value="ABX29232.1"/>
    <property type="molecule type" value="Genomic_DNA"/>
</dbReference>
<dbReference type="RefSeq" id="WP_001050913.1">
    <property type="nucleotide sequence ID" value="NC_010079.1"/>
</dbReference>
<dbReference type="SMR" id="A8Z1V7"/>
<dbReference type="KEGG" id="sax:USA300HOU_1218"/>
<dbReference type="HOGENOM" id="CLU_028328_1_0_9"/>
<dbReference type="GO" id="GO:0005886">
    <property type="term" value="C:plasma membrane"/>
    <property type="evidence" value="ECO:0007669"/>
    <property type="project" value="UniProtKB-SubCell"/>
</dbReference>
<dbReference type="GO" id="GO:0003723">
    <property type="term" value="F:RNA binding"/>
    <property type="evidence" value="ECO:0007669"/>
    <property type="project" value="UniProtKB-UniRule"/>
</dbReference>
<dbReference type="GO" id="GO:0004521">
    <property type="term" value="F:RNA endonuclease activity"/>
    <property type="evidence" value="ECO:0007669"/>
    <property type="project" value="UniProtKB-UniRule"/>
</dbReference>
<dbReference type="GO" id="GO:0006402">
    <property type="term" value="P:mRNA catabolic process"/>
    <property type="evidence" value="ECO:0007669"/>
    <property type="project" value="UniProtKB-UniRule"/>
</dbReference>
<dbReference type="CDD" id="cd00077">
    <property type="entry name" value="HDc"/>
    <property type="match status" value="1"/>
</dbReference>
<dbReference type="CDD" id="cd22431">
    <property type="entry name" value="KH-I_RNaseY"/>
    <property type="match status" value="1"/>
</dbReference>
<dbReference type="FunFam" id="1.10.3210.10:FF:000003">
    <property type="entry name" value="Ribonuclease Y"/>
    <property type="match status" value="1"/>
</dbReference>
<dbReference type="FunFam" id="3.30.1370.10:FF:000006">
    <property type="entry name" value="Ribonuclease Y"/>
    <property type="match status" value="1"/>
</dbReference>
<dbReference type="Gene3D" id="1.10.3210.10">
    <property type="entry name" value="Hypothetical protein af1432"/>
    <property type="match status" value="1"/>
</dbReference>
<dbReference type="Gene3D" id="3.30.1370.10">
    <property type="entry name" value="K Homology domain, type 1"/>
    <property type="match status" value="1"/>
</dbReference>
<dbReference type="HAMAP" id="MF_00335">
    <property type="entry name" value="RNase_Y"/>
    <property type="match status" value="1"/>
</dbReference>
<dbReference type="InterPro" id="IPR003607">
    <property type="entry name" value="HD/PDEase_dom"/>
</dbReference>
<dbReference type="InterPro" id="IPR006674">
    <property type="entry name" value="HD_domain"/>
</dbReference>
<dbReference type="InterPro" id="IPR006675">
    <property type="entry name" value="HDIG_dom"/>
</dbReference>
<dbReference type="InterPro" id="IPR004087">
    <property type="entry name" value="KH_dom"/>
</dbReference>
<dbReference type="InterPro" id="IPR004088">
    <property type="entry name" value="KH_dom_type_1"/>
</dbReference>
<dbReference type="InterPro" id="IPR036612">
    <property type="entry name" value="KH_dom_type_1_sf"/>
</dbReference>
<dbReference type="InterPro" id="IPR017705">
    <property type="entry name" value="Ribonuclease_Y"/>
</dbReference>
<dbReference type="InterPro" id="IPR022711">
    <property type="entry name" value="RNase_Y_N"/>
</dbReference>
<dbReference type="NCBIfam" id="TIGR00277">
    <property type="entry name" value="HDIG"/>
    <property type="match status" value="1"/>
</dbReference>
<dbReference type="NCBIfam" id="TIGR03319">
    <property type="entry name" value="RNase_Y"/>
    <property type="match status" value="1"/>
</dbReference>
<dbReference type="PANTHER" id="PTHR12826">
    <property type="entry name" value="RIBONUCLEASE Y"/>
    <property type="match status" value="1"/>
</dbReference>
<dbReference type="PANTHER" id="PTHR12826:SF15">
    <property type="entry name" value="RIBONUCLEASE Y"/>
    <property type="match status" value="1"/>
</dbReference>
<dbReference type="Pfam" id="PF01966">
    <property type="entry name" value="HD"/>
    <property type="match status" value="1"/>
</dbReference>
<dbReference type="Pfam" id="PF00013">
    <property type="entry name" value="KH_1"/>
    <property type="match status" value="1"/>
</dbReference>
<dbReference type="Pfam" id="PF12072">
    <property type="entry name" value="RNase_Y_N"/>
    <property type="match status" value="1"/>
</dbReference>
<dbReference type="SMART" id="SM00471">
    <property type="entry name" value="HDc"/>
    <property type="match status" value="1"/>
</dbReference>
<dbReference type="SMART" id="SM00322">
    <property type="entry name" value="KH"/>
    <property type="match status" value="1"/>
</dbReference>
<dbReference type="SUPFAM" id="SSF54791">
    <property type="entry name" value="Eukaryotic type KH-domain (KH-domain type I)"/>
    <property type="match status" value="1"/>
</dbReference>
<dbReference type="SUPFAM" id="SSF109604">
    <property type="entry name" value="HD-domain/PDEase-like"/>
    <property type="match status" value="1"/>
</dbReference>
<dbReference type="PROSITE" id="PS51831">
    <property type="entry name" value="HD"/>
    <property type="match status" value="1"/>
</dbReference>
<dbReference type="PROSITE" id="PS50084">
    <property type="entry name" value="KH_TYPE_1"/>
    <property type="match status" value="1"/>
</dbReference>
<sequence>MNLLSLLLILLGIILGVVGGYVVARNLLLQKQSQARQTAEDIVNQAHKEADNIKKEKLLEAKEENQILREQTEAELRERRSELQRQETRLLQKEENLERKSDLLDKKDEILEQKESKIEEKQQQVDAKESSVQTLIMKHEQELERISGLTQEEAINEQLQRVEEELSQDIAVLVKEKEKEAKEKVDKTAKELLATAVQRLAADHTSESTVSVVNLPNDEMKGRIIGREGRNIRTLETLTGIDLIIDDTPEAVILSGFDPIRREIARTALVNLVSDGRIHPGRIEDMVEKARKEVDDIIREAGEQATFEVNAHNMHPDLVKIVGRLNYRTSYGQNVLKHSIEVAHLASMLAAELGEDETLAKRAGLLHDVGKAIDHEVEGSHVEIGVELAKKYGENETVINAIHSHHGDVEPTSIISILVAAADALSAARPGARKETLENYIRRLERLETLSESYDGVEKAFAIQAGREIRVIVSPEEIDDLKSYRLARDIKNQIEDELQYPGHIKVTVVRETRAVEYAK</sequence>
<protein>
    <recommendedName>
        <fullName evidence="1">Ribonuclease Y</fullName>
        <shortName evidence="1">RNase Y</shortName>
        <ecNumber evidence="1">3.1.-.-</ecNumber>
    </recommendedName>
    <alternativeName>
        <fullName>Conserved virulence factor A</fullName>
    </alternativeName>
</protein>
<accession>A8Z1V7</accession>
<organism>
    <name type="scientific">Staphylococcus aureus (strain USA300 / TCH1516)</name>
    <dbReference type="NCBI Taxonomy" id="451516"/>
    <lineage>
        <taxon>Bacteria</taxon>
        <taxon>Bacillati</taxon>
        <taxon>Bacillota</taxon>
        <taxon>Bacilli</taxon>
        <taxon>Bacillales</taxon>
        <taxon>Staphylococcaceae</taxon>
        <taxon>Staphylococcus</taxon>
    </lineage>
</organism>
<proteinExistence type="inferred from homology"/>
<feature type="chain" id="PRO_0000344936" description="Ribonuclease Y">
    <location>
        <begin position="1"/>
        <end position="519"/>
    </location>
</feature>
<feature type="transmembrane region" description="Helical" evidence="1">
    <location>
        <begin position="3"/>
        <end position="23"/>
    </location>
</feature>
<feature type="domain" description="KH" evidence="1">
    <location>
        <begin position="209"/>
        <end position="269"/>
    </location>
</feature>
<feature type="domain" description="HD" evidence="2">
    <location>
        <begin position="335"/>
        <end position="428"/>
    </location>
</feature>
<name>RNY_STAAT</name>
<gene>
    <name evidence="1" type="primary">rny</name>
    <name type="synonym">cvfA</name>
    <name type="ordered locus">USA300HOU_1218</name>
</gene>